<name>TM163_BOVIN</name>
<gene>
    <name type="primary">TMEM163</name>
</gene>
<comment type="function">
    <text evidence="1 2 4">Zinc ion transporter that mediates zinc efflux and plays a crucial role in intracellular zinc homeostasis (By similarity). Binds the divalent cations Zn(2+), Ni(2+), and to a minor extent Cu(2+) (By similarity). Is a functional modulator of P2X purinoceptors, including P2RX1, P2RX3, P2RX4 and P2RX7 (By similarity). Plays a role in central nervous system development and is required for myelination, and survival and proliferation of oligodendrocytes (By similarity).</text>
</comment>
<comment type="catalytic activity">
    <reaction evidence="4">
        <text>Zn(2+)(in) = Zn(2+)(out)</text>
        <dbReference type="Rhea" id="RHEA:29351"/>
        <dbReference type="ChEBI" id="CHEBI:29105"/>
    </reaction>
    <physiologicalReaction direction="left-to-right" evidence="4">
        <dbReference type="Rhea" id="RHEA:29352"/>
    </physiologicalReaction>
</comment>
<comment type="subunit">
    <text evidence="4">Homodimer. Interacts with MCOLN1/TRPML1. Interacts with SLC30A1, SLC30A2, SLC30A3 and SLC30A4.</text>
</comment>
<comment type="subcellular location">
    <subcellularLocation>
        <location evidence="3">Cytoplasmic vesicle</location>
        <location evidence="3">Secretory vesicle</location>
        <location evidence="3">Synaptic vesicle membrane</location>
        <topology evidence="5">Multi-pass membrane protein</topology>
    </subcellularLocation>
    <subcellularLocation>
        <location evidence="1">Early endosome membrane</location>
        <topology evidence="5">Multi-pass membrane protein</topology>
    </subcellularLocation>
    <subcellularLocation>
        <location evidence="4">Late endosome membrane</location>
        <topology evidence="5">Multi-pass membrane protein</topology>
    </subcellularLocation>
    <subcellularLocation>
        <location evidence="4">Lysosome membrane</location>
        <topology evidence="5">Multi-pass membrane protein</topology>
    </subcellularLocation>
    <subcellularLocation>
        <location evidence="4">Cell membrane</location>
        <topology evidence="5">Multi-pass membrane protein</topology>
    </subcellularLocation>
    <text evidence="1">Glutamatergic synaptic vesicles.</text>
</comment>
<comment type="similarity">
    <text evidence="7">Belongs to the TMEM163 family.</text>
</comment>
<proteinExistence type="evidence at transcript level"/>
<organism>
    <name type="scientific">Bos taurus</name>
    <name type="common">Bovine</name>
    <dbReference type="NCBI Taxonomy" id="9913"/>
    <lineage>
        <taxon>Eukaryota</taxon>
        <taxon>Metazoa</taxon>
        <taxon>Chordata</taxon>
        <taxon>Craniata</taxon>
        <taxon>Vertebrata</taxon>
        <taxon>Euteleostomi</taxon>
        <taxon>Mammalia</taxon>
        <taxon>Eutheria</taxon>
        <taxon>Laurasiatheria</taxon>
        <taxon>Artiodactyla</taxon>
        <taxon>Ruminantia</taxon>
        <taxon>Pecora</taxon>
        <taxon>Bovidae</taxon>
        <taxon>Bovinae</taxon>
        <taxon>Bos</taxon>
    </lineage>
</organism>
<protein>
    <recommendedName>
        <fullName>Transmembrane protein 163</fullName>
    </recommendedName>
</protein>
<dbReference type="EMBL" id="DAAA02005010">
    <property type="status" value="NOT_ANNOTATED_CDS"/>
    <property type="molecule type" value="Genomic_DNA"/>
</dbReference>
<dbReference type="EMBL" id="DAAA02005011">
    <property type="status" value="NOT_ANNOTATED_CDS"/>
    <property type="molecule type" value="Genomic_DNA"/>
</dbReference>
<dbReference type="EMBL" id="DAAA02005012">
    <property type="status" value="NOT_ANNOTATED_CDS"/>
    <property type="molecule type" value="Genomic_DNA"/>
</dbReference>
<dbReference type="EMBL" id="DAAA02005013">
    <property type="status" value="NOT_ANNOTATED_CDS"/>
    <property type="molecule type" value="Genomic_DNA"/>
</dbReference>
<dbReference type="EMBL" id="BC150036">
    <property type="protein sequence ID" value="AAI50037.1"/>
    <property type="molecule type" value="mRNA"/>
</dbReference>
<dbReference type="RefSeq" id="NP_001094630.1">
    <property type="nucleotide sequence ID" value="NM_001101160.2"/>
</dbReference>
<dbReference type="SMR" id="A6QQX9"/>
<dbReference type="FunCoup" id="A6QQX9">
    <property type="interactions" value="566"/>
</dbReference>
<dbReference type="PaxDb" id="9913-ENSBTAP00000024972"/>
<dbReference type="Ensembl" id="ENSBTAT00000024972.6">
    <property type="protein sequence ID" value="ENSBTAP00000024972.4"/>
    <property type="gene ID" value="ENSBTAG00000018753.6"/>
</dbReference>
<dbReference type="GeneID" id="534678"/>
<dbReference type="KEGG" id="bta:534678"/>
<dbReference type="CTD" id="81615"/>
<dbReference type="VEuPathDB" id="HostDB:ENSBTAG00000018753"/>
<dbReference type="VGNC" id="VGNC:35988">
    <property type="gene designation" value="TMEM163"/>
</dbReference>
<dbReference type="eggNOG" id="ENOG502QW7B">
    <property type="taxonomic scope" value="Eukaryota"/>
</dbReference>
<dbReference type="GeneTree" id="ENSGT00390000001170"/>
<dbReference type="HOGENOM" id="CLU_081161_0_0_1"/>
<dbReference type="InParanoid" id="A6QQX9"/>
<dbReference type="OMA" id="IMRYSAS"/>
<dbReference type="OrthoDB" id="5980560at2759"/>
<dbReference type="TreeFam" id="TF330782"/>
<dbReference type="Proteomes" id="UP000009136">
    <property type="component" value="Chromosome 2"/>
</dbReference>
<dbReference type="Bgee" id="ENSBTAG00000018753">
    <property type="expression patterns" value="Expressed in oocyte and 92 other cell types or tissues"/>
</dbReference>
<dbReference type="GO" id="GO:0031901">
    <property type="term" value="C:early endosome membrane"/>
    <property type="evidence" value="ECO:0000250"/>
    <property type="project" value="UniProtKB"/>
</dbReference>
<dbReference type="GO" id="GO:0031902">
    <property type="term" value="C:late endosome membrane"/>
    <property type="evidence" value="ECO:0007669"/>
    <property type="project" value="UniProtKB-SubCell"/>
</dbReference>
<dbReference type="GO" id="GO:0005765">
    <property type="term" value="C:lysosomal membrane"/>
    <property type="evidence" value="ECO:0007669"/>
    <property type="project" value="UniProtKB-SubCell"/>
</dbReference>
<dbReference type="GO" id="GO:0005886">
    <property type="term" value="C:plasma membrane"/>
    <property type="evidence" value="ECO:0007669"/>
    <property type="project" value="UniProtKB-SubCell"/>
</dbReference>
<dbReference type="GO" id="GO:0030672">
    <property type="term" value="C:synaptic vesicle membrane"/>
    <property type="evidence" value="ECO:0000250"/>
    <property type="project" value="UniProtKB"/>
</dbReference>
<dbReference type="GO" id="GO:0008270">
    <property type="term" value="F:zinc ion binding"/>
    <property type="evidence" value="ECO:0000250"/>
    <property type="project" value="UniProtKB"/>
</dbReference>
<dbReference type="GO" id="GO:0042552">
    <property type="term" value="P:myelination"/>
    <property type="evidence" value="ECO:0000250"/>
    <property type="project" value="UniProtKB"/>
</dbReference>
<dbReference type="GO" id="GO:0140882">
    <property type="term" value="P:zinc export across plasma membrane"/>
    <property type="evidence" value="ECO:0000250"/>
    <property type="project" value="UniProtKB"/>
</dbReference>
<dbReference type="FunFam" id="1.20.1510.10:FF:000018">
    <property type="entry name" value="transmembrane protein 163"/>
    <property type="match status" value="1"/>
</dbReference>
<dbReference type="Gene3D" id="1.20.1510.10">
    <property type="entry name" value="Cation efflux protein transmembrane domain"/>
    <property type="match status" value="1"/>
</dbReference>
<dbReference type="InterPro" id="IPR027469">
    <property type="entry name" value="Cation_efflux_TMD_sf"/>
</dbReference>
<dbReference type="InterPro" id="IPR026765">
    <property type="entry name" value="Tmem163"/>
</dbReference>
<dbReference type="PANTHER" id="PTHR31937">
    <property type="entry name" value="TRANSMEMBRANE PROTEIN 163"/>
    <property type="match status" value="1"/>
</dbReference>
<dbReference type="PANTHER" id="PTHR31937:SF2">
    <property type="entry name" value="TRANSMEMBRANE PROTEIN 163"/>
    <property type="match status" value="1"/>
</dbReference>
<dbReference type="SUPFAM" id="SSF161111">
    <property type="entry name" value="Cation efflux protein transmembrane domain-like"/>
    <property type="match status" value="1"/>
</dbReference>
<feature type="chain" id="PRO_0000416585" description="Transmembrane protein 163">
    <location>
        <begin position="1"/>
        <end position="287"/>
    </location>
</feature>
<feature type="topological domain" description="Cytoplasmic" evidence="5">
    <location>
        <begin position="1"/>
        <end position="86"/>
    </location>
</feature>
<feature type="transmembrane region" description="Helical" evidence="5">
    <location>
        <begin position="87"/>
        <end position="107"/>
    </location>
</feature>
<feature type="topological domain" description="Extracellular" evidence="5">
    <location>
        <begin position="108"/>
        <end position="114"/>
    </location>
</feature>
<feature type="transmembrane region" description="Helical" evidence="5">
    <location>
        <begin position="115"/>
        <end position="135"/>
    </location>
</feature>
<feature type="topological domain" description="Cytoplasmic" evidence="5">
    <location>
        <begin position="136"/>
        <end position="148"/>
    </location>
</feature>
<feature type="transmembrane region" description="Helical" evidence="5">
    <location>
        <begin position="149"/>
        <end position="169"/>
    </location>
</feature>
<feature type="topological domain" description="Extracellular" evidence="5">
    <location>
        <begin position="170"/>
        <end position="185"/>
    </location>
</feature>
<feature type="transmembrane region" description="Helical" evidence="5">
    <location>
        <begin position="186"/>
        <end position="206"/>
    </location>
</feature>
<feature type="topological domain" description="Cytoplasmic" evidence="5">
    <location>
        <begin position="207"/>
        <end position="215"/>
    </location>
</feature>
<feature type="transmembrane region" description="Helical" evidence="5">
    <location>
        <begin position="216"/>
        <end position="236"/>
    </location>
</feature>
<feature type="topological domain" description="Extracellular" evidence="5">
    <location>
        <begin position="237"/>
        <end position="253"/>
    </location>
</feature>
<feature type="transmembrane region" description="Helical" evidence="5">
    <location>
        <begin position="254"/>
        <end position="274"/>
    </location>
</feature>
<feature type="topological domain" description="Cytoplasmic" evidence="5">
    <location>
        <begin position="275"/>
        <end position="287"/>
    </location>
</feature>
<feature type="region of interest" description="Disordered" evidence="6">
    <location>
        <begin position="1"/>
        <end position="63"/>
    </location>
</feature>
<feature type="region of interest" description="Required for interaction with MCOLN1" evidence="4">
    <location>
        <begin position="40"/>
        <end position="70"/>
    </location>
</feature>
<feature type="modified residue" description="Phosphoserine" evidence="1">
    <location>
        <position position="11"/>
    </location>
</feature>
<feature type="modified residue" description="Phosphoserine" evidence="3">
    <location>
        <position position="53"/>
    </location>
</feature>
<feature type="modified residue" description="Phosphoserine" evidence="3">
    <location>
        <position position="55"/>
    </location>
</feature>
<feature type="modified residue" description="Phosphoserine" evidence="3">
    <location>
        <position position="59"/>
    </location>
</feature>
<accession>A6QQX9</accession>
<keyword id="KW-1003">Cell membrane</keyword>
<keyword id="KW-0968">Cytoplasmic vesicle</keyword>
<keyword id="KW-0967">Endosome</keyword>
<keyword id="KW-0458">Lysosome</keyword>
<keyword id="KW-0472">Membrane</keyword>
<keyword id="KW-0597">Phosphoprotein</keyword>
<keyword id="KW-1185">Reference proteome</keyword>
<keyword id="KW-0770">Synapse</keyword>
<keyword id="KW-0812">Transmembrane</keyword>
<keyword id="KW-1133">Transmembrane helix</keyword>
<keyword id="KW-0813">Transport</keyword>
<keyword id="KW-0862">Zinc</keyword>
<evidence type="ECO:0000250" key="1">
    <source>
        <dbReference type="UniProtKB" id="A9CMA6"/>
    </source>
</evidence>
<evidence type="ECO:0000250" key="2">
    <source>
        <dbReference type="UniProtKB" id="B0UY98"/>
    </source>
</evidence>
<evidence type="ECO:0000250" key="3">
    <source>
        <dbReference type="UniProtKB" id="Q8C996"/>
    </source>
</evidence>
<evidence type="ECO:0000250" key="4">
    <source>
        <dbReference type="UniProtKB" id="Q8TC26"/>
    </source>
</evidence>
<evidence type="ECO:0000255" key="5"/>
<evidence type="ECO:0000256" key="6">
    <source>
        <dbReference type="SAM" id="MobiDB-lite"/>
    </source>
</evidence>
<evidence type="ECO:0000305" key="7"/>
<sequence length="287" mass="31195">METAAGSERRSTPGPAVPPPPRGHAPLATASGPLSSPAREPPQPEEERQLRISESGQFSDGLEDRGLLESSTRLKPHEAQNYRKKALWVSWFSIIVTLALAVAAFTVSVMRYSASAFGFAFDAILDVLSSAIVLWRYSNAAAVHSAHREYIACVILGVIFLLSSVCIVVKAIHDLSTKLLPEVDDFLFSVSILSGILCSILAVLKFMLGKVLTSRALITDGFNSLVGGVMGFSILLSAEVFKHNSAVWYLDGSIGVLIGLTIFAYGVKLLIDMVPRVRQTRHYEMFE</sequence>
<reference key="1">
    <citation type="journal article" date="2009" name="Genome Biol.">
        <title>A whole-genome assembly of the domestic cow, Bos taurus.</title>
        <authorList>
            <person name="Zimin A.V."/>
            <person name="Delcher A.L."/>
            <person name="Florea L."/>
            <person name="Kelley D.R."/>
            <person name="Schatz M.C."/>
            <person name="Puiu D."/>
            <person name="Hanrahan F."/>
            <person name="Pertea G."/>
            <person name="Van Tassell C.P."/>
            <person name="Sonstegard T.S."/>
            <person name="Marcais G."/>
            <person name="Roberts M."/>
            <person name="Subramanian P."/>
            <person name="Yorke J.A."/>
            <person name="Salzberg S.L."/>
        </authorList>
    </citation>
    <scope>NUCLEOTIDE SEQUENCE [LARGE SCALE GENOMIC DNA]</scope>
    <source>
        <strain>Hereford</strain>
    </source>
</reference>
<reference key="2">
    <citation type="submission" date="2007-07" db="EMBL/GenBank/DDBJ databases">
        <authorList>
            <consortium name="NIH - Mammalian Gene Collection (MGC) project"/>
        </authorList>
    </citation>
    <scope>NUCLEOTIDE SEQUENCE [LARGE SCALE MRNA]</scope>
    <source>
        <strain>Hereford</strain>
        <tissue>Fetal pons</tissue>
    </source>
</reference>